<organism>
    <name type="scientific">Populus alba</name>
    <name type="common">White poplar</name>
    <dbReference type="NCBI Taxonomy" id="43335"/>
    <lineage>
        <taxon>Eukaryota</taxon>
        <taxon>Viridiplantae</taxon>
        <taxon>Streptophyta</taxon>
        <taxon>Embryophyta</taxon>
        <taxon>Tracheophyta</taxon>
        <taxon>Spermatophyta</taxon>
        <taxon>Magnoliopsida</taxon>
        <taxon>eudicotyledons</taxon>
        <taxon>Gunneridae</taxon>
        <taxon>Pentapetalae</taxon>
        <taxon>rosids</taxon>
        <taxon>fabids</taxon>
        <taxon>Malpighiales</taxon>
        <taxon>Salicaceae</taxon>
        <taxon>Saliceae</taxon>
        <taxon>Populus</taxon>
    </lineage>
</organism>
<accession>Q50L36</accession>
<comment type="function">
    <text evidence="5">Lyase that catalyzes the formation of isoprene from dimethylallyl diphosphate, but not from isopentenyl diphosphate or geranyl diphosphate.</text>
</comment>
<comment type="catalytic activity">
    <reaction evidence="5">
        <text>dimethylallyl diphosphate = isoprene + diphosphate</text>
        <dbReference type="Rhea" id="RHEA:13369"/>
        <dbReference type="ChEBI" id="CHEBI:33019"/>
        <dbReference type="ChEBI" id="CHEBI:35194"/>
        <dbReference type="ChEBI" id="CHEBI:57623"/>
        <dbReference type="EC" id="4.2.3.27"/>
    </reaction>
    <physiologicalReaction direction="left-to-right" evidence="5">
        <dbReference type="Rhea" id="RHEA:13370"/>
    </physiologicalReaction>
</comment>
<comment type="cofactor">
    <cofactor evidence="5">
        <name>Mg(2+)</name>
        <dbReference type="ChEBI" id="CHEBI:18420"/>
    </cofactor>
    <text evidence="5">Magnesium. Can also use other divalent metal cations, except copper and calcium.</text>
</comment>
<comment type="biophysicochemical properties">
    <kinetics>
        <KM evidence="5">8.7 mM for dimethylallyl diphosphate</KM>
    </kinetics>
    <phDependence>
        <text evidence="5">Optimum pH is 8.0. Active from pH 6.5 to 9.5.</text>
    </phDependence>
    <temperatureDependence>
        <text evidence="5">Optimum temperature is 40 degrees Celsius.</text>
    </temperatureDependence>
</comment>
<comment type="pathway">
    <text evidence="5">Terpene metabolism.</text>
</comment>
<comment type="subcellular location">
    <subcellularLocation>
        <location evidence="5">Plastid</location>
        <location evidence="5">Chloroplast</location>
    </subcellularLocation>
</comment>
<comment type="tissue specificity">
    <text evidence="5">Predominantly expressed in leaves.</text>
</comment>
<comment type="induction">
    <text evidence="5">Up-regulated by heat stress and continuous light. Down-regulated by continuous dark and cold stress. Not induced by pathogens or treatment with methyl jasmonate or methyl salicylate.</text>
</comment>
<comment type="domain">
    <text evidence="1">The Asp-Asp-Xaa-Xaa-Asp/Glu (DDXXD/E) motif is important for the catalytic activity, presumably through binding to Mg(2+).</text>
</comment>
<comment type="similarity">
    <text evidence="7">Belongs to the terpene synthase family. Tpsb subfamily.</text>
</comment>
<gene>
    <name evidence="6" type="primary">ISPS</name>
</gene>
<reference key="1">
    <citation type="journal article" date="2005" name="FEBS Lett.">
        <title>Gene expression and characterization of isoprene synthase from Populus alba.</title>
        <authorList>
            <person name="Sasaki K."/>
            <person name="Ohara K."/>
            <person name="Yazaki K."/>
        </authorList>
    </citation>
    <scope>NUCLEOTIDE SEQUENCE [MRNA]</scope>
    <scope>FUNCTION</scope>
    <scope>CATALYTIC ACTIVITY</scope>
    <scope>TISSUE SPECIFICITY</scope>
    <scope>INDUCTION BY LIGHT AND HEAT</scope>
    <scope>SUBCELLULAR LOCATION</scope>
    <scope>BIOPHYSICOCHEMICAL PROPERTIES</scope>
    <scope>COFACTOR</scope>
    <scope>PATHWAY</scope>
</reference>
<keyword id="KW-0150">Chloroplast</keyword>
<keyword id="KW-0456">Lyase</keyword>
<keyword id="KW-0460">Magnesium</keyword>
<keyword id="KW-0479">Metal-binding</keyword>
<keyword id="KW-0934">Plastid</keyword>
<keyword id="KW-0809">Transit peptide</keyword>
<evidence type="ECO:0000250" key="1">
    <source>
        <dbReference type="UniProtKB" id="A0A1C9J6A7"/>
    </source>
</evidence>
<evidence type="ECO:0000250" key="2">
    <source>
        <dbReference type="UniProtKB" id="Q40577"/>
    </source>
</evidence>
<evidence type="ECO:0000250" key="3">
    <source>
        <dbReference type="UniProtKB" id="Q9AR86"/>
    </source>
</evidence>
<evidence type="ECO:0000255" key="4"/>
<evidence type="ECO:0000269" key="5">
    <source>
    </source>
</evidence>
<evidence type="ECO:0000303" key="6">
    <source>
    </source>
</evidence>
<evidence type="ECO:0000305" key="7"/>
<protein>
    <recommendedName>
        <fullName evidence="6">Isoprene synthase, chloroplastic</fullName>
        <shortName evidence="6">PaIspS</shortName>
        <ecNumber evidence="5">4.2.3.27</ecNumber>
    </recommendedName>
</protein>
<proteinExistence type="evidence at protein level"/>
<name>ISPS_POPAL</name>
<dbReference type="EC" id="4.2.3.27" evidence="5"/>
<dbReference type="EMBL" id="AB198180">
    <property type="protein sequence ID" value="BAD98243.1"/>
    <property type="molecule type" value="mRNA"/>
</dbReference>
<dbReference type="SMR" id="Q50L36"/>
<dbReference type="KEGG" id="ag:BAD98243"/>
<dbReference type="BioCyc" id="MetaCyc:MONOMER-14888"/>
<dbReference type="BRENDA" id="4.2.3.27">
    <property type="organism ID" value="4969"/>
</dbReference>
<dbReference type="GO" id="GO:0009507">
    <property type="term" value="C:chloroplast"/>
    <property type="evidence" value="ECO:0000314"/>
    <property type="project" value="UniProtKB"/>
</dbReference>
<dbReference type="GO" id="GO:0034009">
    <property type="term" value="F:isoprene synthase activity"/>
    <property type="evidence" value="ECO:0000314"/>
    <property type="project" value="UniProtKB"/>
</dbReference>
<dbReference type="GO" id="GO:0000287">
    <property type="term" value="F:magnesium ion binding"/>
    <property type="evidence" value="ECO:0000314"/>
    <property type="project" value="UniProtKB"/>
</dbReference>
<dbReference type="GO" id="GO:0071485">
    <property type="term" value="P:cellular response to absence of light"/>
    <property type="evidence" value="ECO:0000270"/>
    <property type="project" value="UniProtKB"/>
</dbReference>
<dbReference type="GO" id="GO:0071482">
    <property type="term" value="P:cellular response to light stimulus"/>
    <property type="evidence" value="ECO:0000270"/>
    <property type="project" value="UniProtKB"/>
</dbReference>
<dbReference type="GO" id="GO:0050993">
    <property type="term" value="P:dimethylallyl diphosphate metabolic process"/>
    <property type="evidence" value="ECO:0000314"/>
    <property type="project" value="UniProtKB"/>
</dbReference>
<dbReference type="GO" id="GO:0016102">
    <property type="term" value="P:diterpenoid biosynthetic process"/>
    <property type="evidence" value="ECO:0007669"/>
    <property type="project" value="InterPro"/>
</dbReference>
<dbReference type="GO" id="GO:0043612">
    <property type="term" value="P:isoprene biosynthetic process"/>
    <property type="evidence" value="ECO:0000314"/>
    <property type="project" value="UniProtKB"/>
</dbReference>
<dbReference type="GO" id="GO:0009409">
    <property type="term" value="P:response to cold"/>
    <property type="evidence" value="ECO:0000270"/>
    <property type="project" value="UniProtKB"/>
</dbReference>
<dbReference type="GO" id="GO:0009408">
    <property type="term" value="P:response to heat"/>
    <property type="evidence" value="ECO:0000270"/>
    <property type="project" value="UniProtKB"/>
</dbReference>
<dbReference type="CDD" id="cd00684">
    <property type="entry name" value="Terpene_cyclase_plant_C1"/>
    <property type="match status" value="1"/>
</dbReference>
<dbReference type="FunFam" id="1.10.600.10:FF:000007">
    <property type="entry name" value="Isoprene synthase, chloroplastic"/>
    <property type="match status" value="1"/>
</dbReference>
<dbReference type="FunFam" id="1.50.10.130:FF:000001">
    <property type="entry name" value="Isoprene synthase, chloroplastic"/>
    <property type="match status" value="1"/>
</dbReference>
<dbReference type="Gene3D" id="1.10.600.10">
    <property type="entry name" value="Farnesyl Diphosphate Synthase"/>
    <property type="match status" value="1"/>
</dbReference>
<dbReference type="Gene3D" id="1.50.10.130">
    <property type="entry name" value="Terpene synthase, N-terminal domain"/>
    <property type="match status" value="1"/>
</dbReference>
<dbReference type="InterPro" id="IPR008949">
    <property type="entry name" value="Isoprenoid_synthase_dom_sf"/>
</dbReference>
<dbReference type="InterPro" id="IPR034741">
    <property type="entry name" value="Terpene_cyclase-like_1_C"/>
</dbReference>
<dbReference type="InterPro" id="IPR044814">
    <property type="entry name" value="Terpene_cyclase_plant_C1"/>
</dbReference>
<dbReference type="InterPro" id="IPR001906">
    <property type="entry name" value="Terpene_synth_N"/>
</dbReference>
<dbReference type="InterPro" id="IPR036965">
    <property type="entry name" value="Terpene_synth_N_sf"/>
</dbReference>
<dbReference type="InterPro" id="IPR050148">
    <property type="entry name" value="Terpene_synthase-like"/>
</dbReference>
<dbReference type="InterPro" id="IPR005630">
    <property type="entry name" value="Terpene_synthase_metal-bd"/>
</dbReference>
<dbReference type="InterPro" id="IPR008930">
    <property type="entry name" value="Terpenoid_cyclase/PrenylTrfase"/>
</dbReference>
<dbReference type="PANTHER" id="PTHR31225">
    <property type="entry name" value="OS04G0344100 PROTEIN-RELATED"/>
    <property type="match status" value="1"/>
</dbReference>
<dbReference type="PANTHER" id="PTHR31225:SF252">
    <property type="entry name" value="TERPENE SYNTHASE 12-RELATED"/>
    <property type="match status" value="1"/>
</dbReference>
<dbReference type="Pfam" id="PF01397">
    <property type="entry name" value="Terpene_synth"/>
    <property type="match status" value="1"/>
</dbReference>
<dbReference type="Pfam" id="PF03936">
    <property type="entry name" value="Terpene_synth_C"/>
    <property type="match status" value="1"/>
</dbReference>
<dbReference type="SFLD" id="SFLDG01019">
    <property type="entry name" value="Terpene_Cyclase_Like_1_C_Termi"/>
    <property type="match status" value="1"/>
</dbReference>
<dbReference type="SFLD" id="SFLDG01604">
    <property type="entry name" value="Terpene_Cyclase_Like_1_C_Termi"/>
    <property type="match status" value="1"/>
</dbReference>
<dbReference type="SUPFAM" id="SSF48239">
    <property type="entry name" value="Terpenoid cyclases/Protein prenyltransferases"/>
    <property type="match status" value="1"/>
</dbReference>
<dbReference type="SUPFAM" id="SSF48576">
    <property type="entry name" value="Terpenoid synthases"/>
    <property type="match status" value="1"/>
</dbReference>
<feature type="transit peptide" description="Chloroplast" evidence="4">
    <location>
        <begin position="1"/>
        <end position="37"/>
    </location>
</feature>
<feature type="chain" id="PRO_0000398179" description="Isoprene synthase, chloroplastic">
    <location>
        <begin position="38"/>
        <end position="595"/>
    </location>
</feature>
<feature type="short sequence motif" description="DDXXD motif" evidence="1">
    <location>
        <begin position="345"/>
        <end position="349"/>
    </location>
</feature>
<feature type="binding site" evidence="3">
    <location>
        <position position="345"/>
    </location>
    <ligand>
        <name>dimethylallyl diphosphate</name>
        <dbReference type="ChEBI" id="CHEBI:57623"/>
    </ligand>
</feature>
<feature type="binding site" evidence="2">
    <location>
        <position position="345"/>
    </location>
    <ligand>
        <name>Mg(2+)</name>
        <dbReference type="ChEBI" id="CHEBI:18420"/>
        <label>1</label>
    </ligand>
</feature>
<feature type="binding site" evidence="2">
    <location>
        <position position="345"/>
    </location>
    <ligand>
        <name>Mg(2+)</name>
        <dbReference type="ChEBI" id="CHEBI:18420"/>
        <label>2</label>
    </ligand>
</feature>
<feature type="binding site" evidence="2">
    <location>
        <position position="349"/>
    </location>
    <ligand>
        <name>Mg(2+)</name>
        <dbReference type="ChEBI" id="CHEBI:18420"/>
        <label>1</label>
    </ligand>
</feature>
<feature type="binding site" evidence="2">
    <location>
        <position position="349"/>
    </location>
    <ligand>
        <name>Mg(2+)</name>
        <dbReference type="ChEBI" id="CHEBI:18420"/>
        <label>2</label>
    </ligand>
</feature>
<feature type="binding site" evidence="3">
    <location>
        <position position="423"/>
    </location>
    <ligand>
        <name>dimethylallyl diphosphate</name>
        <dbReference type="ChEBI" id="CHEBI:57623"/>
    </ligand>
</feature>
<feature type="binding site" evidence="3">
    <location>
        <position position="486"/>
    </location>
    <ligand>
        <name>dimethylallyl diphosphate</name>
        <dbReference type="ChEBI" id="CHEBI:57623"/>
    </ligand>
</feature>
<feature type="binding site" evidence="3">
    <location>
        <position position="489"/>
    </location>
    <ligand>
        <name>dimethylallyl diphosphate</name>
        <dbReference type="ChEBI" id="CHEBI:57623"/>
    </ligand>
</feature>
<feature type="binding site" evidence="2">
    <location>
        <position position="489"/>
    </location>
    <ligand>
        <name>Mg(2+)</name>
        <dbReference type="ChEBI" id="CHEBI:18420"/>
        <label>3</label>
    </ligand>
</feature>
<feature type="binding site" evidence="2">
    <location>
        <position position="493"/>
    </location>
    <ligand>
        <name>Mg(2+)</name>
        <dbReference type="ChEBI" id="CHEBI:18420"/>
        <label>3</label>
    </ligand>
</feature>
<feature type="binding site" evidence="2">
    <location>
        <position position="497"/>
    </location>
    <ligand>
        <name>Mg(2+)</name>
        <dbReference type="ChEBI" id="CHEBI:18420"/>
        <label>3</label>
    </ligand>
</feature>
<sequence>MATELLCLHRPISLTHKLFRNPLPKVIQATPLTLKLRCSVSTENVSFTETETEARRSANYEPNSWDYDYLLSSDTDESIEVYKDKAKKLEAEVRREINNEKAEFLTLLELIDNVQRLGLGYRFESDIRGALDRFVSSGGFDAVTKTSLHGTALSFRLLRQHGFEVSQEAFSGFKDQNGNFLENLKEDIKAILSLYEASFLALEGENILDEAKVFAISHLKELSEEKIGKELAEQVNHALELPLHRRTQRLEAVWSIEAYRKKEDANQVLLELAILDYNMIQSVYQRDLRETSRWWRRVGLATKLHFARDRLIESFYWAVGVAFEPQYSDCRNSVAKMFSFVTIIDDIYDVYGTLDELELFTDAVERWDVNAINDLPDYMKLCFLALYNTINEIAYDNLKDKGENILPYLTKAWADLCNAFLQEAKWLYNKSTPTFDDYFGNAWKSSSGPLQLVFAYFAVVQNIKKEEIENLQKYHDTISRPSHIFRLCNDLASASAEIARGETANSVSCYMRTKGISEELATESVMNLIDETWKKMNKEKLGGSLFAKPFVETAINLARQSHCTYHNGDAHTSPDELTRKRVLSVITEPILPFER</sequence>